<keyword id="KW-0004">4Fe-4S</keyword>
<keyword id="KW-0028">Amino-acid biosynthesis</keyword>
<keyword id="KW-0100">Branched-chain amino acid biosynthesis</keyword>
<keyword id="KW-0408">Iron</keyword>
<keyword id="KW-0411">Iron-sulfur</keyword>
<keyword id="KW-0432">Leucine biosynthesis</keyword>
<keyword id="KW-0456">Lyase</keyword>
<keyword id="KW-0479">Metal-binding</keyword>
<keyword id="KW-1185">Reference proteome</keyword>
<accession>Q24XT4</accession>
<name>LEUC_DESHY</name>
<evidence type="ECO:0000255" key="1">
    <source>
        <dbReference type="HAMAP-Rule" id="MF_01027"/>
    </source>
</evidence>
<evidence type="ECO:0000305" key="2"/>
<dbReference type="EC" id="4.2.1.33" evidence="1"/>
<dbReference type="EMBL" id="AP008230">
    <property type="protein sequence ID" value="BAE83158.1"/>
    <property type="status" value="ALT_INIT"/>
    <property type="molecule type" value="Genomic_DNA"/>
</dbReference>
<dbReference type="RefSeq" id="WP_026198993.1">
    <property type="nucleotide sequence ID" value="NC_007907.1"/>
</dbReference>
<dbReference type="SMR" id="Q24XT4"/>
<dbReference type="STRING" id="138119.DSY1369"/>
<dbReference type="KEGG" id="dsy:DSY1369"/>
<dbReference type="eggNOG" id="COG0065">
    <property type="taxonomic scope" value="Bacteria"/>
</dbReference>
<dbReference type="HOGENOM" id="CLU_006714_3_4_9"/>
<dbReference type="UniPathway" id="UPA00048">
    <property type="reaction ID" value="UER00071"/>
</dbReference>
<dbReference type="Proteomes" id="UP000001946">
    <property type="component" value="Chromosome"/>
</dbReference>
<dbReference type="GO" id="GO:0003861">
    <property type="term" value="F:3-isopropylmalate dehydratase activity"/>
    <property type="evidence" value="ECO:0007669"/>
    <property type="project" value="UniProtKB-UniRule"/>
</dbReference>
<dbReference type="GO" id="GO:0051539">
    <property type="term" value="F:4 iron, 4 sulfur cluster binding"/>
    <property type="evidence" value="ECO:0007669"/>
    <property type="project" value="UniProtKB-KW"/>
</dbReference>
<dbReference type="GO" id="GO:0046872">
    <property type="term" value="F:metal ion binding"/>
    <property type="evidence" value="ECO:0007669"/>
    <property type="project" value="UniProtKB-KW"/>
</dbReference>
<dbReference type="GO" id="GO:0009098">
    <property type="term" value="P:L-leucine biosynthetic process"/>
    <property type="evidence" value="ECO:0007669"/>
    <property type="project" value="UniProtKB-UniRule"/>
</dbReference>
<dbReference type="CDD" id="cd01583">
    <property type="entry name" value="IPMI"/>
    <property type="match status" value="1"/>
</dbReference>
<dbReference type="Gene3D" id="3.30.499.10">
    <property type="entry name" value="Aconitase, domain 3"/>
    <property type="match status" value="2"/>
</dbReference>
<dbReference type="HAMAP" id="MF_01027">
    <property type="entry name" value="LeuC_type2"/>
    <property type="match status" value="1"/>
</dbReference>
<dbReference type="InterPro" id="IPR015931">
    <property type="entry name" value="Acnase/IPM_dHydase_lsu_aba_1/3"/>
</dbReference>
<dbReference type="InterPro" id="IPR001030">
    <property type="entry name" value="Acoase/IPM_deHydtase_lsu_aba"/>
</dbReference>
<dbReference type="InterPro" id="IPR018136">
    <property type="entry name" value="Aconitase_4Fe-4S_BS"/>
</dbReference>
<dbReference type="InterPro" id="IPR036008">
    <property type="entry name" value="Aconitase_4Fe-4S_dom"/>
</dbReference>
<dbReference type="InterPro" id="IPR011826">
    <property type="entry name" value="HAcnase/IPMdehydase_lsu_prok"/>
</dbReference>
<dbReference type="InterPro" id="IPR006251">
    <property type="entry name" value="Homoacnase/IPMdehydase_lsu"/>
</dbReference>
<dbReference type="InterPro" id="IPR050067">
    <property type="entry name" value="IPM_dehydratase_rel_enz"/>
</dbReference>
<dbReference type="InterPro" id="IPR033941">
    <property type="entry name" value="IPMI_cat"/>
</dbReference>
<dbReference type="InterPro" id="IPR011823">
    <property type="entry name" value="IsopropMal_deHydtase_lsu_bac"/>
</dbReference>
<dbReference type="NCBIfam" id="TIGR01343">
    <property type="entry name" value="hacA_fam"/>
    <property type="match status" value="1"/>
</dbReference>
<dbReference type="NCBIfam" id="TIGR02086">
    <property type="entry name" value="IPMI_arch"/>
    <property type="match status" value="1"/>
</dbReference>
<dbReference type="NCBIfam" id="TIGR02083">
    <property type="entry name" value="LEU2"/>
    <property type="match status" value="1"/>
</dbReference>
<dbReference type="NCBIfam" id="NF001614">
    <property type="entry name" value="PRK00402.1"/>
    <property type="match status" value="1"/>
</dbReference>
<dbReference type="PANTHER" id="PTHR43822:SF16">
    <property type="entry name" value="3-ISOPROPYLMALATE DEHYDRATASE LARGE SUBUNIT 2"/>
    <property type="match status" value="1"/>
</dbReference>
<dbReference type="PANTHER" id="PTHR43822">
    <property type="entry name" value="HOMOACONITASE, MITOCHONDRIAL-RELATED"/>
    <property type="match status" value="1"/>
</dbReference>
<dbReference type="Pfam" id="PF00330">
    <property type="entry name" value="Aconitase"/>
    <property type="match status" value="2"/>
</dbReference>
<dbReference type="PRINTS" id="PR00415">
    <property type="entry name" value="ACONITASE"/>
</dbReference>
<dbReference type="SUPFAM" id="SSF53732">
    <property type="entry name" value="Aconitase iron-sulfur domain"/>
    <property type="match status" value="1"/>
</dbReference>
<dbReference type="PROSITE" id="PS00450">
    <property type="entry name" value="ACONITASE_1"/>
    <property type="match status" value="1"/>
</dbReference>
<dbReference type="PROSITE" id="PS01244">
    <property type="entry name" value="ACONITASE_2"/>
    <property type="match status" value="1"/>
</dbReference>
<protein>
    <recommendedName>
        <fullName evidence="1">3-isopropylmalate dehydratase large subunit</fullName>
        <ecNumber evidence="1">4.2.1.33</ecNumber>
    </recommendedName>
    <alternativeName>
        <fullName evidence="1">Alpha-IPM isomerase</fullName>
        <shortName evidence="1">IPMI</shortName>
    </alternativeName>
    <alternativeName>
        <fullName evidence="1">Isopropylmalate isomerase</fullName>
    </alternativeName>
</protein>
<comment type="function">
    <text evidence="1">Catalyzes the isomerization between 2-isopropylmalate and 3-isopropylmalate, via the formation of 2-isopropylmaleate.</text>
</comment>
<comment type="catalytic activity">
    <reaction evidence="1">
        <text>(2R,3S)-3-isopropylmalate = (2S)-2-isopropylmalate</text>
        <dbReference type="Rhea" id="RHEA:32287"/>
        <dbReference type="ChEBI" id="CHEBI:1178"/>
        <dbReference type="ChEBI" id="CHEBI:35121"/>
        <dbReference type="EC" id="4.2.1.33"/>
    </reaction>
</comment>
<comment type="cofactor">
    <cofactor evidence="1">
        <name>[4Fe-4S] cluster</name>
        <dbReference type="ChEBI" id="CHEBI:49883"/>
    </cofactor>
    <text evidence="1">Binds 1 [4Fe-4S] cluster per subunit.</text>
</comment>
<comment type="pathway">
    <text evidence="1">Amino-acid biosynthesis; L-leucine biosynthesis; L-leucine from 3-methyl-2-oxobutanoate: step 2/4.</text>
</comment>
<comment type="subunit">
    <text evidence="1">Heterodimer of LeuC and LeuD.</text>
</comment>
<comment type="similarity">
    <text evidence="1">Belongs to the aconitase/IPM isomerase family. LeuC type 2 subfamily.</text>
</comment>
<comment type="sequence caution" evidence="2">
    <conflict type="erroneous initiation">
        <sequence resource="EMBL-CDS" id="BAE83158"/>
    </conflict>
</comment>
<feature type="chain" id="PRO_0000319843" description="3-isopropylmalate dehydratase large subunit">
    <location>
        <begin position="1"/>
        <end position="421"/>
    </location>
</feature>
<feature type="binding site" evidence="1">
    <location>
        <position position="301"/>
    </location>
    <ligand>
        <name>[4Fe-4S] cluster</name>
        <dbReference type="ChEBI" id="CHEBI:49883"/>
    </ligand>
</feature>
<feature type="binding site" evidence="1">
    <location>
        <position position="361"/>
    </location>
    <ligand>
        <name>[4Fe-4S] cluster</name>
        <dbReference type="ChEBI" id="CHEBI:49883"/>
    </ligand>
</feature>
<feature type="binding site" evidence="1">
    <location>
        <position position="364"/>
    </location>
    <ligand>
        <name>[4Fe-4S] cluster</name>
        <dbReference type="ChEBI" id="CHEBI:49883"/>
    </ligand>
</feature>
<proteinExistence type="inferred from homology"/>
<reference key="1">
    <citation type="journal article" date="2006" name="J. Bacteriol.">
        <title>Complete genome sequence of the dehalorespiring bacterium Desulfitobacterium hafniense Y51 and comparison with Dehalococcoides ethenogenes 195.</title>
        <authorList>
            <person name="Nonaka H."/>
            <person name="Keresztes G."/>
            <person name="Shinoda Y."/>
            <person name="Ikenaga Y."/>
            <person name="Abe M."/>
            <person name="Naito K."/>
            <person name="Inatomi K."/>
            <person name="Furukawa K."/>
            <person name="Inui M."/>
            <person name="Yukawa H."/>
        </authorList>
    </citation>
    <scope>NUCLEOTIDE SEQUENCE [LARGE SCALE GENOMIC DNA]</scope>
    <source>
        <strain>Y51</strain>
    </source>
</reference>
<organism>
    <name type="scientific">Desulfitobacterium hafniense (strain Y51)</name>
    <dbReference type="NCBI Taxonomy" id="138119"/>
    <lineage>
        <taxon>Bacteria</taxon>
        <taxon>Bacillati</taxon>
        <taxon>Bacillota</taxon>
        <taxon>Clostridia</taxon>
        <taxon>Eubacteriales</taxon>
        <taxon>Desulfitobacteriaceae</taxon>
        <taxon>Desulfitobacterium</taxon>
    </lineage>
</organism>
<gene>
    <name evidence="1" type="primary">leuC</name>
    <name type="ordered locus">DSY1369</name>
</gene>
<sequence>MAMTITEKILAEHAGLDKVVPGQLITAQLDLALANDITGPVSIREFEKFGVETVWDKTKVALVPDHFTPNKDIASAELSKALREFAKKQGIVHYWEQGRVGVEHCLLPEQGVTLPGDVIIGADSHTCTYGALGAFATGVGSTDLAAGMATGEAWFRIPESIKFIFKGTNFQPWVSGKDLILYTIGKIGVDGARYRSMEFTGEGIAALSMDGRLTMCNMAVEAGAKNGIIPPDEKTLAYVNERAKRPYKVYHSDPDAQYVEVYEWDVADIPLQVAFPHLPENAKPVSEGKGIKIDQVVIGSCTNGRLEDMQVAAQILKGQKVHGDVRLIVIPGTQDIYKQAMQEGLIDIFIDAGAVVSTPTCGPCLGGYMGILAKGERALSTTNRNFVGRMGHPESEVYLSGPAVAAASAVTGEISHPEEVL</sequence>